<protein>
    <recommendedName>
        <fullName>Protein Vpx</fullName>
    </recommendedName>
    <alternativeName>
        <fullName>Viral protein X</fullName>
    </alternativeName>
    <alternativeName>
        <fullName>X ORF protein</fullName>
    </alternativeName>
</protein>
<reference key="1">
    <citation type="journal article" date="1988" name="Nature">
        <title>Comparison of simian immunodeficiency virus isolates.</title>
        <authorList>
            <person name="Kestler H.W."/>
            <person name="Li Y."/>
            <person name="Naidu Y.M."/>
            <person name="Butler C.V."/>
            <person name="Ochs M.F."/>
            <person name="Jaenel G."/>
            <person name="King N.W."/>
            <person name="Daniel M.D."/>
            <person name="Desrosiers R.C."/>
        </authorList>
    </citation>
    <scope>NUCLEOTIDE SEQUENCE [GENOMIC DNA]</scope>
</reference>
<sequence>MSDPRERIPPGNSGEETIGEAFEWLNRTVEEINREAVNHLPRELIFQVWQRSWEYWHDEQGMSQSYVKYRYLCLMQKALFMHCKKGCRCLGEGHGAGGWRPGPPPPPPPGLA</sequence>
<accession>P11266</accession>
<name>VPX_SIVM2</name>
<organism>
    <name type="scientific">Simian immunodeficiency virus (isolate Mm251)</name>
    <name type="common">SIV-mac</name>
    <name type="synonym">Simian immunodeficiency virus rhesus monkey</name>
    <dbReference type="NCBI Taxonomy" id="11734"/>
    <lineage>
        <taxon>Viruses</taxon>
        <taxon>Riboviria</taxon>
        <taxon>Pararnavirae</taxon>
        <taxon>Artverviricota</taxon>
        <taxon>Revtraviricetes</taxon>
        <taxon>Ortervirales</taxon>
        <taxon>Retroviridae</taxon>
        <taxon>Orthoretrovirinae</taxon>
        <taxon>Lentivirus</taxon>
        <taxon>Simian immunodeficiency virus</taxon>
    </lineage>
</organism>
<dbReference type="EMBL" id="M19499">
    <property type="protein sequence ID" value="AAB59908.1"/>
    <property type="molecule type" value="Genomic_RNA"/>
</dbReference>
<dbReference type="PIR" id="D26737">
    <property type="entry name" value="ASLJST"/>
</dbReference>
<dbReference type="SMR" id="P11266"/>
<dbReference type="Proteomes" id="UP000258290">
    <property type="component" value="Segment"/>
</dbReference>
<dbReference type="GO" id="GO:0042025">
    <property type="term" value="C:host cell nucleus"/>
    <property type="evidence" value="ECO:0007669"/>
    <property type="project" value="UniProtKB-SubCell"/>
</dbReference>
<dbReference type="GO" id="GO:0044423">
    <property type="term" value="C:virion component"/>
    <property type="evidence" value="ECO:0007669"/>
    <property type="project" value="UniProtKB-KW"/>
</dbReference>
<dbReference type="GO" id="GO:0052170">
    <property type="term" value="P:symbiont-mediated suppression of host innate immune response"/>
    <property type="evidence" value="ECO:0007669"/>
    <property type="project" value="UniProtKB-KW"/>
</dbReference>
<dbReference type="GO" id="GO:0019058">
    <property type="term" value="P:viral life cycle"/>
    <property type="evidence" value="ECO:0007669"/>
    <property type="project" value="InterPro"/>
</dbReference>
<dbReference type="Gene3D" id="1.20.5.4730">
    <property type="match status" value="1"/>
</dbReference>
<dbReference type="InterPro" id="IPR053711">
    <property type="entry name" value="Lentiviral_Vpx_assoc_factor"/>
</dbReference>
<dbReference type="InterPro" id="IPR000012">
    <property type="entry name" value="RetroV_VpR/X"/>
</dbReference>
<dbReference type="Pfam" id="PF00522">
    <property type="entry name" value="VPR"/>
    <property type="match status" value="1"/>
</dbReference>
<organismHost>
    <name type="scientific">Cercopithecidae</name>
    <name type="common">Old World monkeys</name>
    <dbReference type="NCBI Taxonomy" id="9527"/>
</organismHost>
<feature type="chain" id="PRO_0000085405" description="Protein Vpx">
    <location>
        <begin position="1"/>
        <end position="112"/>
    </location>
</feature>
<feature type="short sequence motif" description="Nuclear localization signal" evidence="1">
    <location>
        <begin position="65"/>
        <end position="72"/>
    </location>
</feature>
<comment type="function">
    <text evidence="1">Plays a role in nuclear translocation of the viral pre-integration complex (PIC), thus is required for the virus to infect non-dividing cells. Targets specific host proteins for degradation by the 26S proteasome. Acts by associating with the cellular CUL4A-DDB1 E3 ligase complex through direct interaction with host VPRPB/DCAF-1. This change in the E3 ligase substrate specificity results in the degradation of host SAMHD1. In turn, SAMHD1 depletion allows viral replication in host myeloid cells by preventing SAMHD1-mediated hydrolysis of intracellular dNTPs necessary for reverse transcription (By similarity).</text>
</comment>
<comment type="subunit">
    <text evidence="1">Interacts with the P6 region of unprocessed GAG. Interacts with host VPRBP/DCAF1, leading to change substrate specificity of the CUL4A-DDB1 E3 ligase complex (By similarity).</text>
</comment>
<comment type="subcellular location">
    <subcellularLocation>
        <location>Virion</location>
    </subcellularLocation>
    <subcellularLocation>
        <location>Host nucleus</location>
    </subcellularLocation>
    <text evidence="1">Nuclear just after virion uncoating, or if expressed in the absence of unprocessed GAG.</text>
</comment>
<comment type="similarity">
    <text evidence="2">Belongs to the lentivirus VPX protein family.</text>
</comment>
<keyword id="KW-1048">Host nucleus</keyword>
<keyword id="KW-0945">Host-virus interaction</keyword>
<keyword id="KW-1090">Inhibition of host innate immune response by virus</keyword>
<keyword id="KW-0899">Viral immunoevasion</keyword>
<keyword id="KW-0946">Virion</keyword>
<gene>
    <name type="primary">vpx</name>
</gene>
<evidence type="ECO:0000250" key="1"/>
<evidence type="ECO:0000305" key="2"/>
<proteinExistence type="inferred from homology"/>